<sequence>MDWLKRWFTRKDQDKTETTSASKRAKITSSLLMFSALYEAKKPLKYTIVYILALVNAFFLLVFIQQTGLYSFGISSLTQGFARLLFVLLKNLEDGQRNLVFNIFYWLFYVIVNIPLIIFSYKKIGKRFTILSTHYVVASNVFGFIFSIIPGANQLPSMLSAVHHTEFWEDAKKAEGVDQSALFVPFLWNDTSQGNVIISTFIYAGIYGFVNGTSLAILYILGSCAGGADFLTQYFARKKNRSVGPILFYVNTFILIIAILMGSFVAGSIVLQDIPDYKKSAWQVNLFFSPNLIATFFSVLFTGTVVSHLFPRYNFAEIKVFTDKIEEVRLALLNDKATHSLSIQETMGGYSLAKKRMIVSVTMYVEIPNLIRIIRKIDKDCLVSITRIRGIDGYIYLRSQD</sequence>
<keyword id="KW-1003">Cell membrane</keyword>
<keyword id="KW-0472">Membrane</keyword>
<keyword id="KW-1185">Reference proteome</keyword>
<keyword id="KW-0812">Transmembrane</keyword>
<keyword id="KW-1133">Transmembrane helix</keyword>
<evidence type="ECO:0000255" key="1"/>
<evidence type="ECO:0000305" key="2"/>
<reference key="1">
    <citation type="journal article" date="1996" name="Nucleic Acids Res.">
        <title>Complete sequence analysis of the genome of the bacterium Mycoplasma pneumoniae.</title>
        <authorList>
            <person name="Himmelreich R."/>
            <person name="Hilbert H."/>
            <person name="Plagens H."/>
            <person name="Pirkl E."/>
            <person name="Li B.-C."/>
            <person name="Herrmann R."/>
        </authorList>
    </citation>
    <scope>NUCLEOTIDE SEQUENCE [LARGE SCALE GENOMIC DNA]</scope>
    <source>
        <strain>ATCC 29342 / M129 / Subtype 1</strain>
    </source>
</reference>
<organism>
    <name type="scientific">Mycoplasma pneumoniae (strain ATCC 29342 / M129 / Subtype 1)</name>
    <name type="common">Mycoplasmoides pneumoniae</name>
    <dbReference type="NCBI Taxonomy" id="272634"/>
    <lineage>
        <taxon>Bacteria</taxon>
        <taxon>Bacillati</taxon>
        <taxon>Mycoplasmatota</taxon>
        <taxon>Mycoplasmoidales</taxon>
        <taxon>Mycoplasmoidaceae</taxon>
        <taxon>Mycoplasmoides</taxon>
    </lineage>
</organism>
<protein>
    <recommendedName>
        <fullName>Uncharacterized protein MG443 homolog</fullName>
    </recommendedName>
</protein>
<dbReference type="EMBL" id="U00089">
    <property type="protein sequence ID" value="AAB95833.1"/>
    <property type="molecule type" value="Genomic_DNA"/>
</dbReference>
<dbReference type="PIR" id="S73511">
    <property type="entry name" value="S73511"/>
</dbReference>
<dbReference type="RefSeq" id="NP_110346.1">
    <property type="nucleotide sequence ID" value="NC_000912.1"/>
</dbReference>
<dbReference type="RefSeq" id="WP_010875014.1">
    <property type="nucleotide sequence ID" value="NC_000912.1"/>
</dbReference>
<dbReference type="SMR" id="P75134"/>
<dbReference type="STRING" id="272634.MPN_657"/>
<dbReference type="EnsemblBacteria" id="AAB95833">
    <property type="protein sequence ID" value="AAB95833"/>
    <property type="gene ID" value="MPN_657"/>
</dbReference>
<dbReference type="KEGG" id="mpn:MPN_657"/>
<dbReference type="PATRIC" id="fig|272634.6.peg.722"/>
<dbReference type="HOGENOM" id="CLU_043038_0_0_14"/>
<dbReference type="OrthoDB" id="387512at2"/>
<dbReference type="BioCyc" id="MPNE272634:G1GJ3-1051-MONOMER"/>
<dbReference type="Proteomes" id="UP000000808">
    <property type="component" value="Chromosome"/>
</dbReference>
<dbReference type="GO" id="GO:0005886">
    <property type="term" value="C:plasma membrane"/>
    <property type="evidence" value="ECO:0007669"/>
    <property type="project" value="UniProtKB-SubCell"/>
</dbReference>
<dbReference type="Gene3D" id="3.30.70.120">
    <property type="match status" value="1"/>
</dbReference>
<dbReference type="InterPro" id="IPR019264">
    <property type="entry name" value="DUF2179"/>
</dbReference>
<dbReference type="InterPro" id="IPR015867">
    <property type="entry name" value="N-reg_PII/ATP_PRibTrfase_C"/>
</dbReference>
<dbReference type="InterPro" id="IPR051461">
    <property type="entry name" value="UPF0750_membrane"/>
</dbReference>
<dbReference type="InterPro" id="IPR003740">
    <property type="entry name" value="YitT"/>
</dbReference>
<dbReference type="PANTHER" id="PTHR33545:SF5">
    <property type="entry name" value="UPF0750 MEMBRANE PROTEIN YITT"/>
    <property type="match status" value="1"/>
</dbReference>
<dbReference type="PANTHER" id="PTHR33545">
    <property type="entry name" value="UPF0750 MEMBRANE PROTEIN YITT-RELATED"/>
    <property type="match status" value="1"/>
</dbReference>
<dbReference type="Pfam" id="PF10035">
    <property type="entry name" value="DUF2179"/>
    <property type="match status" value="1"/>
</dbReference>
<dbReference type="Pfam" id="PF02588">
    <property type="entry name" value="YitT_membrane"/>
    <property type="match status" value="2"/>
</dbReference>
<gene>
    <name type="ordered locus">MPN_657</name>
    <name type="ORF">K05_orf401</name>
    <name type="ORF">MP185</name>
</gene>
<comment type="subcellular location">
    <subcellularLocation>
        <location evidence="2">Cell membrane</location>
        <topology evidence="2">Multi-pass membrane protein</topology>
    </subcellularLocation>
</comment>
<name>Y657_MYCPN</name>
<feature type="chain" id="PRO_0000210617" description="Uncharacterized protein MG443 homolog">
    <location>
        <begin position="1"/>
        <end position="401"/>
    </location>
</feature>
<feature type="transmembrane region" description="Helical" evidence="1">
    <location>
        <begin position="44"/>
        <end position="64"/>
    </location>
</feature>
<feature type="transmembrane region" description="Helical" evidence="1">
    <location>
        <begin position="69"/>
        <end position="89"/>
    </location>
</feature>
<feature type="transmembrane region" description="Helical" evidence="1">
    <location>
        <begin position="99"/>
        <end position="119"/>
    </location>
</feature>
<feature type="transmembrane region" description="Helical" evidence="1">
    <location>
        <begin position="130"/>
        <end position="150"/>
    </location>
</feature>
<feature type="transmembrane region" description="Helical" evidence="1">
    <location>
        <begin position="201"/>
        <end position="221"/>
    </location>
</feature>
<feature type="transmembrane region" description="Helical" evidence="1">
    <location>
        <begin position="246"/>
        <end position="266"/>
    </location>
</feature>
<feature type="transmembrane region" description="Helical" evidence="1">
    <location>
        <begin position="286"/>
        <end position="306"/>
    </location>
</feature>
<accession>P75134</accession>
<proteinExistence type="predicted"/>